<proteinExistence type="inferred from homology"/>
<organism>
    <name type="scientific">Danio rerio</name>
    <name type="common">Zebrafish</name>
    <name type="synonym">Brachydanio rerio</name>
    <dbReference type="NCBI Taxonomy" id="7955"/>
    <lineage>
        <taxon>Eukaryota</taxon>
        <taxon>Metazoa</taxon>
        <taxon>Chordata</taxon>
        <taxon>Craniata</taxon>
        <taxon>Vertebrata</taxon>
        <taxon>Euteleostomi</taxon>
        <taxon>Actinopterygii</taxon>
        <taxon>Neopterygii</taxon>
        <taxon>Teleostei</taxon>
        <taxon>Ostariophysi</taxon>
        <taxon>Cypriniformes</taxon>
        <taxon>Danionidae</taxon>
        <taxon>Danioninae</taxon>
        <taxon>Danio</taxon>
    </lineage>
</organism>
<accession>P0C8Y2</accession>
<protein>
    <recommendedName>
        <fullName>UPF0729 protein C18orf32 homolog</fullName>
    </recommendedName>
</protein>
<dbReference type="EMBL" id="BC125856">
    <property type="status" value="NOT_ANNOTATED_CDS"/>
    <property type="molecule type" value="mRNA"/>
</dbReference>
<dbReference type="SMR" id="P0C8Y2"/>
<dbReference type="FunCoup" id="P0C8Y2">
    <property type="interactions" value="385"/>
</dbReference>
<dbReference type="InParanoid" id="P0C8Y2"/>
<dbReference type="Proteomes" id="UP000000437">
    <property type="component" value="Unplaced"/>
</dbReference>
<dbReference type="GO" id="GO:0005783">
    <property type="term" value="C:endoplasmic reticulum"/>
    <property type="evidence" value="ECO:0000250"/>
    <property type="project" value="UniProtKB"/>
</dbReference>
<dbReference type="GO" id="GO:0005811">
    <property type="term" value="C:lipid droplet"/>
    <property type="evidence" value="ECO:0000250"/>
    <property type="project" value="UniProtKB"/>
</dbReference>
<dbReference type="InterPro" id="IPR026776">
    <property type="entry name" value="UPF0729_C18orf32-like"/>
</dbReference>
<dbReference type="PANTHER" id="PTHR13456">
    <property type="entry name" value="UPF0729 PROTEIN C18ORF32"/>
    <property type="match status" value="1"/>
</dbReference>
<dbReference type="PANTHER" id="PTHR13456:SF0">
    <property type="entry name" value="UPF0729 PROTEIN C18ORF32"/>
    <property type="match status" value="1"/>
</dbReference>
<dbReference type="Pfam" id="PF14975">
    <property type="entry name" value="DUF4512"/>
    <property type="match status" value="1"/>
</dbReference>
<sequence length="75" mass="8302">MVCIPCIVIPVLLWVYKRFLEPVLYPIISPIISRFWRKTPLQDTPQQKTSTAECNGAANGSTANGPKTVADKKAD</sequence>
<comment type="subcellular location">
    <subcellularLocation>
        <location evidence="1">Endoplasmic reticulum</location>
    </subcellularLocation>
    <subcellularLocation>
        <location evidence="1">Lipid droplet</location>
    </subcellularLocation>
</comment>
<comment type="similarity">
    <text evidence="3">Belongs to the UPF0729 family.</text>
</comment>
<name>CR032_DANRE</name>
<reference key="1">
    <citation type="submission" date="2006-10" db="EMBL/GenBank/DDBJ databases">
        <authorList>
            <consortium name="NIH - Zebrafish Gene Collection (ZGC) project"/>
        </authorList>
    </citation>
    <scope>NUCLEOTIDE SEQUENCE [LARGE SCALE MRNA]</scope>
    <source>
        <tissue>Olfactory epithelium</tissue>
    </source>
</reference>
<keyword id="KW-0256">Endoplasmic reticulum</keyword>
<keyword id="KW-0551">Lipid droplet</keyword>
<keyword id="KW-1185">Reference proteome</keyword>
<evidence type="ECO:0000250" key="1">
    <source>
        <dbReference type="UniProtKB" id="Q8TCD1"/>
    </source>
</evidence>
<evidence type="ECO:0000256" key="2">
    <source>
        <dbReference type="SAM" id="MobiDB-lite"/>
    </source>
</evidence>
<evidence type="ECO:0000305" key="3"/>
<feature type="chain" id="PRO_0000366193" description="UPF0729 protein C18orf32 homolog">
    <location>
        <begin position="1"/>
        <end position="75"/>
    </location>
</feature>
<feature type="region of interest" description="Necessary for its localzation to the endoplasmic reticulum and lipid droplets" evidence="1">
    <location>
        <begin position="1"/>
        <end position="37"/>
    </location>
</feature>
<feature type="region of interest" description="Disordered" evidence="2">
    <location>
        <begin position="43"/>
        <end position="75"/>
    </location>
</feature>
<feature type="compositionally biased region" description="Polar residues" evidence="2">
    <location>
        <begin position="43"/>
        <end position="65"/>
    </location>
</feature>